<name>RL36_BARBK</name>
<accession>A1URD8</accession>
<proteinExistence type="inferred from homology"/>
<feature type="chain" id="PRO_0000302158" description="Large ribosomal subunit protein bL36">
    <location>
        <begin position="1"/>
        <end position="41"/>
    </location>
</feature>
<keyword id="KW-0687">Ribonucleoprotein</keyword>
<keyword id="KW-0689">Ribosomal protein</keyword>
<reference key="1">
    <citation type="submission" date="2006-12" db="EMBL/GenBank/DDBJ databases">
        <authorList>
            <person name="Hendrix L."/>
            <person name="Mohamoud Y."/>
            <person name="Radune D."/>
            <person name="Shvartsbeyn A."/>
            <person name="Daugherty S."/>
            <person name="Dodson R."/>
            <person name="Durkin A.S."/>
            <person name="Harkins D."/>
            <person name="Huot H."/>
            <person name="Kothari S.P."/>
            <person name="Madupu R."/>
            <person name="Li J."/>
            <person name="Nelson W.C."/>
            <person name="Shrivastava S."/>
            <person name="Giglio M.G."/>
            <person name="Haft D."/>
            <person name="Selengut J."/>
            <person name="Fraser-Ligget C."/>
            <person name="Seshadri R."/>
        </authorList>
    </citation>
    <scope>NUCLEOTIDE SEQUENCE [LARGE SCALE GENOMIC DNA]</scope>
    <source>
        <strain>ATCC 35685 / KC583 / Herrer 020/F12,63</strain>
    </source>
</reference>
<comment type="similarity">
    <text evidence="1">Belongs to the bacterial ribosomal protein bL36 family.</text>
</comment>
<sequence>MKIKNSLKALKGRHRDNRVVRRKGRIYILNKTNPRFRARQG</sequence>
<organism>
    <name type="scientific">Bartonella bacilliformis (strain ATCC 35685 / KC583 / Herrer 020/F12,63)</name>
    <dbReference type="NCBI Taxonomy" id="360095"/>
    <lineage>
        <taxon>Bacteria</taxon>
        <taxon>Pseudomonadati</taxon>
        <taxon>Pseudomonadota</taxon>
        <taxon>Alphaproteobacteria</taxon>
        <taxon>Hyphomicrobiales</taxon>
        <taxon>Bartonellaceae</taxon>
        <taxon>Bartonella</taxon>
    </lineage>
</organism>
<evidence type="ECO:0000255" key="1">
    <source>
        <dbReference type="HAMAP-Rule" id="MF_00251"/>
    </source>
</evidence>
<evidence type="ECO:0000305" key="2"/>
<gene>
    <name evidence="1" type="primary">rpmJ</name>
    <name type="ordered locus">BARBAKC583_0205</name>
</gene>
<dbReference type="EMBL" id="CP000524">
    <property type="protein sequence ID" value="ABM44788.1"/>
    <property type="molecule type" value="Genomic_DNA"/>
</dbReference>
<dbReference type="SMR" id="A1URD8"/>
<dbReference type="STRING" id="360095.BARBAKC583_0205"/>
<dbReference type="KEGG" id="bbk:BARBAKC583_0205"/>
<dbReference type="eggNOG" id="COG0257">
    <property type="taxonomic scope" value="Bacteria"/>
</dbReference>
<dbReference type="HOGENOM" id="CLU_135723_3_2_5"/>
<dbReference type="OrthoDB" id="9801558at2"/>
<dbReference type="Proteomes" id="UP000000643">
    <property type="component" value="Chromosome"/>
</dbReference>
<dbReference type="GO" id="GO:1990904">
    <property type="term" value="C:ribonucleoprotein complex"/>
    <property type="evidence" value="ECO:0007669"/>
    <property type="project" value="UniProtKB-KW"/>
</dbReference>
<dbReference type="GO" id="GO:0005840">
    <property type="term" value="C:ribosome"/>
    <property type="evidence" value="ECO:0007669"/>
    <property type="project" value="UniProtKB-KW"/>
</dbReference>
<dbReference type="GO" id="GO:0003735">
    <property type="term" value="F:structural constituent of ribosome"/>
    <property type="evidence" value="ECO:0007669"/>
    <property type="project" value="InterPro"/>
</dbReference>
<dbReference type="GO" id="GO:0006412">
    <property type="term" value="P:translation"/>
    <property type="evidence" value="ECO:0007669"/>
    <property type="project" value="UniProtKB-UniRule"/>
</dbReference>
<dbReference type="HAMAP" id="MF_00251">
    <property type="entry name" value="Ribosomal_bL36"/>
    <property type="match status" value="1"/>
</dbReference>
<dbReference type="InterPro" id="IPR000473">
    <property type="entry name" value="Ribosomal_bL36"/>
</dbReference>
<dbReference type="InterPro" id="IPR035977">
    <property type="entry name" value="Ribosomal_bL36_sp"/>
</dbReference>
<dbReference type="InterPro" id="IPR047621">
    <property type="entry name" value="Ribosomal_L36_bact"/>
</dbReference>
<dbReference type="NCBIfam" id="NF002021">
    <property type="entry name" value="PRK00831.1"/>
    <property type="match status" value="1"/>
</dbReference>
<dbReference type="PANTHER" id="PTHR47781">
    <property type="entry name" value="50S RIBOSOMAL PROTEIN L36 2"/>
    <property type="match status" value="1"/>
</dbReference>
<dbReference type="PANTHER" id="PTHR47781:SF1">
    <property type="entry name" value="LARGE RIBOSOMAL SUBUNIT PROTEIN BL36B"/>
    <property type="match status" value="1"/>
</dbReference>
<dbReference type="Pfam" id="PF00444">
    <property type="entry name" value="Ribosomal_L36"/>
    <property type="match status" value="1"/>
</dbReference>
<dbReference type="SUPFAM" id="SSF57840">
    <property type="entry name" value="Ribosomal protein L36"/>
    <property type="match status" value="1"/>
</dbReference>
<dbReference type="PROSITE" id="PS00828">
    <property type="entry name" value="RIBOSOMAL_L36"/>
    <property type="match status" value="1"/>
</dbReference>
<protein>
    <recommendedName>
        <fullName evidence="1">Large ribosomal subunit protein bL36</fullName>
    </recommendedName>
    <alternativeName>
        <fullName evidence="2">50S ribosomal protein L36</fullName>
    </alternativeName>
</protein>